<comment type="function">
    <text evidence="1">Accelerates the degradation of transcripts by removing pyrophosphate from the 5'-end of triphosphorylated RNA, leading to a more labile monophosphorylated state that can stimulate subsequent ribonuclease cleavage.</text>
</comment>
<comment type="cofactor">
    <cofactor evidence="1">
        <name>a divalent metal cation</name>
        <dbReference type="ChEBI" id="CHEBI:60240"/>
    </cofactor>
</comment>
<comment type="similarity">
    <text evidence="1">Belongs to the Nudix hydrolase family. RppH subfamily.</text>
</comment>
<protein>
    <recommendedName>
        <fullName evidence="1">RNA pyrophosphohydrolase</fullName>
        <ecNumber evidence="1">3.6.1.-</ecNumber>
    </recommendedName>
    <alternativeName>
        <fullName evidence="1">(Di)nucleoside polyphosphate hydrolase</fullName>
    </alternativeName>
</protein>
<sequence>MLDREGFRPNVGIILLNAHNEVFWGKRLREHSWQFPQGGIKYGETPMQAMYRELHEETGLLPEHVKIIGRTRDWLRYEVPDKFIKREVRGHYRGQKQIWFLLRMVGRDCDICLRATDHPEFDAWRWNEYWVPLDAVIEFKRDVYQLALTELSRFLRRPAQRTDKSRGPRAPRYPRVANGHAASEAPAAIDTSAVCSEVEPGANALDETPPRVSLRD</sequence>
<name>RPPH_BURM9</name>
<keyword id="KW-0378">Hydrolase</keyword>
<evidence type="ECO:0000255" key="1">
    <source>
        <dbReference type="HAMAP-Rule" id="MF_00298"/>
    </source>
</evidence>
<evidence type="ECO:0000256" key="2">
    <source>
        <dbReference type="SAM" id="MobiDB-lite"/>
    </source>
</evidence>
<feature type="chain" id="PRO_1000021935" description="RNA pyrophosphohydrolase">
    <location>
        <begin position="1"/>
        <end position="216"/>
    </location>
</feature>
<feature type="domain" description="Nudix hydrolase" evidence="1">
    <location>
        <begin position="6"/>
        <end position="149"/>
    </location>
</feature>
<feature type="region of interest" description="Disordered" evidence="2">
    <location>
        <begin position="159"/>
        <end position="188"/>
    </location>
</feature>
<feature type="short sequence motif" description="Nudix box">
    <location>
        <begin position="38"/>
        <end position="59"/>
    </location>
</feature>
<organism>
    <name type="scientific">Burkholderia mallei (strain NCTC 10229)</name>
    <dbReference type="NCBI Taxonomy" id="412022"/>
    <lineage>
        <taxon>Bacteria</taxon>
        <taxon>Pseudomonadati</taxon>
        <taxon>Pseudomonadota</taxon>
        <taxon>Betaproteobacteria</taxon>
        <taxon>Burkholderiales</taxon>
        <taxon>Burkholderiaceae</taxon>
        <taxon>Burkholderia</taxon>
        <taxon>pseudomallei group</taxon>
    </lineage>
</organism>
<gene>
    <name evidence="1" type="primary">rppH</name>
    <name evidence="1" type="synonym">nudH</name>
    <name type="ordered locus">BMA10229_A1299</name>
</gene>
<reference key="1">
    <citation type="journal article" date="2010" name="Genome Biol. Evol.">
        <title>Continuing evolution of Burkholderia mallei through genome reduction and large-scale rearrangements.</title>
        <authorList>
            <person name="Losada L."/>
            <person name="Ronning C.M."/>
            <person name="DeShazer D."/>
            <person name="Woods D."/>
            <person name="Fedorova N."/>
            <person name="Kim H.S."/>
            <person name="Shabalina S.A."/>
            <person name="Pearson T.R."/>
            <person name="Brinkac L."/>
            <person name="Tan P."/>
            <person name="Nandi T."/>
            <person name="Crabtree J."/>
            <person name="Badger J."/>
            <person name="Beckstrom-Sternberg S."/>
            <person name="Saqib M."/>
            <person name="Schutzer S.E."/>
            <person name="Keim P."/>
            <person name="Nierman W.C."/>
        </authorList>
    </citation>
    <scope>NUCLEOTIDE SEQUENCE [LARGE SCALE GENOMIC DNA]</scope>
    <source>
        <strain>NCTC 10229</strain>
    </source>
</reference>
<proteinExistence type="inferred from homology"/>
<accession>A2S5R4</accession>
<dbReference type="EC" id="3.6.1.-" evidence="1"/>
<dbReference type="EMBL" id="CP000546">
    <property type="protein sequence ID" value="ABN03155.1"/>
    <property type="molecule type" value="Genomic_DNA"/>
</dbReference>
<dbReference type="RefSeq" id="WP_004194263.1">
    <property type="nucleotide sequence ID" value="NC_008836.1"/>
</dbReference>
<dbReference type="SMR" id="A2S5R4"/>
<dbReference type="KEGG" id="bml:BMA10229_A1299"/>
<dbReference type="HOGENOM" id="CLU_087195_0_1_4"/>
<dbReference type="Proteomes" id="UP000002283">
    <property type="component" value="Chromosome I"/>
</dbReference>
<dbReference type="GO" id="GO:0016462">
    <property type="term" value="F:pyrophosphatase activity"/>
    <property type="evidence" value="ECO:0007669"/>
    <property type="project" value="UniProtKB-ARBA"/>
</dbReference>
<dbReference type="CDD" id="cd03671">
    <property type="entry name" value="NUDIX_Ap4A_hydrolase_plant_like"/>
    <property type="match status" value="1"/>
</dbReference>
<dbReference type="Gene3D" id="3.90.79.10">
    <property type="entry name" value="Nucleoside Triphosphate Pyrophosphohydrolase"/>
    <property type="match status" value="1"/>
</dbReference>
<dbReference type="HAMAP" id="MF_00298">
    <property type="entry name" value="Nudix_RppH"/>
    <property type="match status" value="1"/>
</dbReference>
<dbReference type="InterPro" id="IPR020476">
    <property type="entry name" value="Nudix_hydrolase"/>
</dbReference>
<dbReference type="InterPro" id="IPR015797">
    <property type="entry name" value="NUDIX_hydrolase-like_dom_sf"/>
</dbReference>
<dbReference type="InterPro" id="IPR020084">
    <property type="entry name" value="NUDIX_hydrolase_CS"/>
</dbReference>
<dbReference type="InterPro" id="IPR000086">
    <property type="entry name" value="NUDIX_hydrolase_dom"/>
</dbReference>
<dbReference type="InterPro" id="IPR022927">
    <property type="entry name" value="RppH"/>
</dbReference>
<dbReference type="NCBIfam" id="NF001935">
    <property type="entry name" value="PRK00714.1-2"/>
    <property type="match status" value="1"/>
</dbReference>
<dbReference type="NCBIfam" id="NF001937">
    <property type="entry name" value="PRK00714.1-4"/>
    <property type="match status" value="1"/>
</dbReference>
<dbReference type="NCBIfam" id="NF001938">
    <property type="entry name" value="PRK00714.1-5"/>
    <property type="match status" value="1"/>
</dbReference>
<dbReference type="PANTHER" id="PTHR43736">
    <property type="entry name" value="ADP-RIBOSE PYROPHOSPHATASE"/>
    <property type="match status" value="1"/>
</dbReference>
<dbReference type="PANTHER" id="PTHR43736:SF1">
    <property type="entry name" value="DIHYDRONEOPTERIN TRIPHOSPHATE DIPHOSPHATASE"/>
    <property type="match status" value="1"/>
</dbReference>
<dbReference type="Pfam" id="PF00293">
    <property type="entry name" value="NUDIX"/>
    <property type="match status" value="1"/>
</dbReference>
<dbReference type="PRINTS" id="PR00502">
    <property type="entry name" value="NUDIXFAMILY"/>
</dbReference>
<dbReference type="SUPFAM" id="SSF55811">
    <property type="entry name" value="Nudix"/>
    <property type="match status" value="1"/>
</dbReference>
<dbReference type="PROSITE" id="PS51462">
    <property type="entry name" value="NUDIX"/>
    <property type="match status" value="1"/>
</dbReference>
<dbReference type="PROSITE" id="PS00893">
    <property type="entry name" value="NUDIX_BOX"/>
    <property type="match status" value="1"/>
</dbReference>